<gene>
    <name evidence="1" type="primary">PTP</name>
</gene>
<dbReference type="EMBL" id="J01917">
    <property type="protein sequence ID" value="AAA92208.1"/>
    <property type="status" value="ALT_INIT"/>
    <property type="molecule type" value="Genomic_DNA"/>
</dbReference>
<dbReference type="PIR" id="A92353">
    <property type="entry name" value="UZADP2"/>
</dbReference>
<dbReference type="RefSeq" id="AP_000167.1">
    <property type="nucleotide sequence ID" value="AC_000007.1"/>
</dbReference>
<dbReference type="Proteomes" id="UP000008167">
    <property type="component" value="Segment"/>
</dbReference>
<dbReference type="GO" id="GO:0044204">
    <property type="term" value="C:host cell nuclear matrix"/>
    <property type="evidence" value="ECO:0007669"/>
    <property type="project" value="UniProtKB-SubCell"/>
</dbReference>
<dbReference type="GO" id="GO:0042025">
    <property type="term" value="C:host cell nucleus"/>
    <property type="evidence" value="ECO:0000314"/>
    <property type="project" value="UniProtKB"/>
</dbReference>
<dbReference type="GO" id="GO:0003690">
    <property type="term" value="F:double-stranded DNA binding"/>
    <property type="evidence" value="ECO:0007669"/>
    <property type="project" value="UniProtKB-UniRule"/>
</dbReference>
<dbReference type="GO" id="GO:0003697">
    <property type="term" value="F:single-stranded DNA binding"/>
    <property type="evidence" value="ECO:0007669"/>
    <property type="project" value="UniProtKB-UniRule"/>
</dbReference>
<dbReference type="GO" id="GO:0006260">
    <property type="term" value="P:DNA replication"/>
    <property type="evidence" value="ECO:0007669"/>
    <property type="project" value="UniProtKB-KW"/>
</dbReference>
<dbReference type="GO" id="GO:0039687">
    <property type="term" value="P:viral DNA strand displacement replication"/>
    <property type="evidence" value="ECO:0000314"/>
    <property type="project" value="UniProtKB"/>
</dbReference>
<dbReference type="HAMAP" id="MF_04061">
    <property type="entry name" value="ADV_TERM"/>
    <property type="match status" value="1"/>
</dbReference>
<dbReference type="InterPro" id="IPR003391">
    <property type="entry name" value="Adeno_preterminal"/>
</dbReference>
<dbReference type="Pfam" id="PF02459">
    <property type="entry name" value="Adeno_terminal"/>
    <property type="match status" value="1"/>
</dbReference>
<organismHost>
    <name type="scientific">Homo sapiens</name>
    <name type="common">Human</name>
    <dbReference type="NCBI Taxonomy" id="9606"/>
</organismHost>
<sequence length="671" mass="76543">MALSVNDCARLTGQSVPTMEHFLPLRNIWNRVRDFPRASTTAAGITWMSRYIYGYHRLMLEDLAPGAPATLRWPLYRQPPPHFLVGYQYLVRTCNDYVFDSRAYSRLRYTELSQPGHQTVNWSVMANCTYTINTGAYHRFVDMDDFQSTLTQVQQAILAERVVADLALLQPMRGFGVTRMGGRGRHLRPNSAAAVAIDARDAGQEEGEEEVPVERLMQDYYKDLRRCQNEAWGMADRLRIQQAGPKDMVLLSTIRRLKTAYFNYIISSTSARNNPDRHPLPPATVLSLPCDCDWLDAFLERFSDPVDADSLRSLGGGVPTQQLLRCIVSAVSLPHGSPPPTHNRDMTGGVFQLRPRENGRAVTETMRRRRGEMIERFVDRLPVRRRRRRVPPPPPPPEEEEEGEALMEEEIEEEEAPVAFEREVRDTVAELIRLLEEELTVSARNSQFFNFAVDFYEAMERLEALGDINESTLRRWVMYFFVAEHTATTLNYLFQRLRNYAVFARHVELNLAQVVMRARDAEGGVVYSRVWNEGGLNAFSQLMARISNDLAATVERAGRGDLQEEEIEQFMAEIAYQDNSGDVQEILRQAAVNDTEIDSVELSFRFKLTGPVVFTQRRQIQEINRRVVAFASNLRAQHQLLPARGADVPLPPLPAGPEPPLPPGARPRHRF</sequence>
<proteinExistence type="evidence at protein level"/>
<accession>P03269</accession>
<reference key="1">
    <citation type="journal article" date="1982" name="J. Biol. Chem.">
        <title>Adenovirus terminal protein precursor. Partial amino acid sequence and the site of covalent linkage to virus DNA.</title>
        <authorList>
            <person name="Smart J.E."/>
            <person name="Stillman B.W."/>
        </authorList>
    </citation>
    <scope>PROTEIN SEQUENCE</scope>
    <scope>COVALENT DNA LINKAGE AT SER-580</scope>
</reference>
<reference key="2">
    <citation type="journal article" date="1982" name="J. Biol. Chem.">
        <title>Nucleotide sequences from the adenovirus-2 genome.</title>
        <authorList>
            <person name="Gingeras T.R."/>
            <person name="Sciaky D."/>
            <person name="Gelinas R.E."/>
            <person name="Bing-Dong J."/>
            <person name="Yen C.E."/>
            <person name="Kelly M.M."/>
            <person name="Bullock P.A."/>
            <person name="Parsons B.L."/>
            <person name="O'Neill K.E."/>
            <person name="Roberts R.J."/>
        </authorList>
    </citation>
    <scope>NUCLEOTIDE SEQUENCE [GENOMIC DNA]</scope>
</reference>
<reference key="3">
    <citation type="journal article" date="1982" name="J. Biol. Chem.">
        <title>DNA sequence analysis of the region encoding the terminal protein and the hypothetical N-gene product of adenovirus type 2.</title>
        <authorList>
            <person name="Alestroem P."/>
            <person name="Akusjaervi G."/>
            <person name="Pettersson M."/>
            <person name="Pettersson U."/>
        </authorList>
    </citation>
    <scope>NUCLEOTIDE SEQUENCE [GENOMIC DNA]</scope>
</reference>
<reference key="4">
    <citation type="journal article" date="1988" name="Cell">
        <title>Nuclear transport of adenovirus DNA polymerase is facilitated by interaction with preterminal protein.</title>
        <authorList>
            <person name="Zhao L.J."/>
            <person name="Padmanabhan R."/>
        </authorList>
    </citation>
    <scope>NUCLEAR LOCALIZATION SIGNAL</scope>
</reference>
<reference key="5">
    <citation type="journal article" date="1989" name="J. Virol.">
        <title>Mutations of the precursor to the terminal protein of adenovirus serotypes 2 and 5.</title>
        <authorList>
            <person name="Pettit S.C."/>
            <person name="Horwitz M.S."/>
            <person name="Engler J.A."/>
        </authorList>
    </citation>
    <scope>MUTAGENESIS OF CYS-8 AND SER-580</scope>
</reference>
<reference key="6">
    <citation type="journal article" date="1992" name="Chromosoma">
        <title>Adenovirus DNA replication: the function of the covalently bound terminal protein.</title>
        <authorList>
            <person name="Pronk R."/>
            <person name="Stuiver M.H."/>
            <person name="van der Vliet P.C."/>
        </authorList>
    </citation>
    <scope>FUNCTION</scope>
</reference>
<reference key="7">
    <citation type="journal article" date="1997" name="J. Virol.">
        <title>Domain organization of the adenovirus preterminal protein.</title>
        <authorList>
            <person name="Webster A."/>
            <person name="Leith I.R."/>
            <person name="Hay R.T."/>
        </authorList>
    </citation>
    <scope>INTERACTION WITH THE POLYMERASE</scope>
</reference>
<reference key="8">
    <citation type="journal article" date="1997" name="J. Virol.">
        <title>Role of preterminal protein processing in adenovirus replication.</title>
        <authorList>
            <person name="Webster A."/>
            <person name="Leith I.R."/>
            <person name="Nicholson J."/>
            <person name="Hounsell J."/>
            <person name="Hay R.T."/>
        </authorList>
    </citation>
    <scope>PROTEOLYTIC CLEAVAGE BY VIRAL PROTEASE</scope>
</reference>
<reference key="9">
    <citation type="journal article" date="2001" name="J. Gen. Virol.">
        <title>Role of conserved residues in the activity of adenovirus preterminal protein.</title>
        <authorList>
            <person name="Botting C.H."/>
            <person name="Hay R.T."/>
        </authorList>
    </citation>
    <scope>NUCLEAR LOCALIZATION SIGNAL</scope>
    <scope>MUTAGENESIS OF 384-ARG-ARG-385; 386-ARG-ARG-387; 437-GLU-GLU-438 AND TYR-492</scope>
</reference>
<reference key="10">
    <citation type="journal article" date="2003" name="Nucleic Acids Res.">
        <title>DNA binding properties of the adenovirus DNA replication priming protein pTP.</title>
        <authorList>
            <person name="de Jong R.N."/>
            <person name="Meijer L.A."/>
            <person name="van der Vliet P.C."/>
        </authorList>
    </citation>
    <scope>DNA-BINDING</scope>
</reference>
<organism>
    <name type="scientific">Human adenovirus C serotype 2</name>
    <name type="common">HAdV-2</name>
    <name type="synonym">Human adenovirus 2</name>
    <dbReference type="NCBI Taxonomy" id="10515"/>
    <lineage>
        <taxon>Viruses</taxon>
        <taxon>Varidnaviria</taxon>
        <taxon>Bamfordvirae</taxon>
        <taxon>Preplasmiviricota</taxon>
        <taxon>Tectiliviricetes</taxon>
        <taxon>Rowavirales</taxon>
        <taxon>Adenoviridae</taxon>
        <taxon>Mastadenovirus</taxon>
        <taxon>Human mastadenovirus C</taxon>
    </lineage>
</organism>
<name>TERM_ADE02</name>
<protein>
    <recommendedName>
        <fullName evidence="1">Preterminal protein</fullName>
        <shortName evidence="1">pTP</shortName>
    </recommendedName>
    <alternativeName>
        <fullName evidence="1">Bellett protein</fullName>
    </alternativeName>
    <alternativeName>
        <fullName evidence="1">Precursor terminal protein</fullName>
    </alternativeName>
    <component>
        <recommendedName>
            <fullName evidence="1">Intermediate terminal protein</fullName>
            <shortName evidence="1">iTP</shortName>
        </recommendedName>
    </component>
    <component>
        <recommendedName>
            <fullName evidence="1">Terminal protein</fullName>
            <shortName evidence="1">TP</shortName>
        </recommendedName>
    </component>
</protein>
<comment type="function">
    <text evidence="1 4">Protein covalently bound to the viral DNA that acts as a primer for viral genomic replication by DNA strand displacement. Assembles on the viral origin of replication in an initiation complex with viral polymerase, DBP, host NFIA and host POU2F1/OCT1. During initiation, the polymerase covalently couples the first dCTP with Ser-580 of pTP. The terminal protein stimulates the template activity over 20 fold compared to protein-free templates. Neo-synthesized viral genomes are linked to two preterminal proteins, one for each 5' end. These new genomes are encapsidated in the nucleus, and during capsid maturation by viral protease, preterminal protein is first cleaved into intermediary (iTP), then into mature TP. May play a role in host nuclear matrix localization of genomic DNA.</text>
</comment>
<comment type="subunit">
    <text evidence="1 8">Heterodimer with the polymerase (PubMed:8985382); this heterodimer binds to bp 9 to 18 of the genome. Interacts with host POU2F1; POU2F1 binds to the auxiliary sequences in the inverted terminal repeats and tethers the pTP-POL heterodimer to the origin DNA thereby participating in the assembly of the pre-initiation complex (POL-TP-DBP-NFIA-POU2F1).</text>
</comment>
<comment type="subcellular location">
    <subcellularLocation>
        <location evidence="1">Host nucleus matrix</location>
    </subcellularLocation>
</comment>
<comment type="PTM">
    <text evidence="1 9">Preterminal protein is used to replicate viral genome, upon genomic encapsidation it is processed first into iTP and finally into TP by adenovirus protease.</text>
</comment>
<comment type="similarity">
    <text evidence="1 10">Belongs to the adenoviridae terminal protein family.</text>
</comment>
<comment type="sequence caution" evidence="10">
    <conflict type="erroneous initiation">
        <sequence resource="EMBL-CDS" id="AAA92208"/>
    </conflict>
</comment>
<keyword id="KW-0190">Covalent protein-DNA linkage</keyword>
<keyword id="KW-0903">Direct protein sequencing</keyword>
<keyword id="KW-0235">DNA replication</keyword>
<keyword id="KW-0238">DNA-binding</keyword>
<keyword id="KW-1048">Host nucleus</keyword>
<keyword id="KW-0597">Phosphoprotein</keyword>
<keyword id="KW-1185">Reference proteome</keyword>
<keyword id="KW-1194">Viral DNA replication</keyword>
<feature type="chain" id="PRO_0000221893" description="Preterminal protein" evidence="1">
    <location>
        <begin position="1"/>
        <end position="671"/>
    </location>
</feature>
<feature type="chain" id="PRO_0000421691" description="Intermediate terminal protein" evidence="1">
    <location>
        <begin position="176"/>
        <end position="671"/>
    </location>
</feature>
<feature type="chain" id="PRO_0000421692" description="Terminal protein" evidence="1">
    <location>
        <begin position="350"/>
        <end position="671"/>
    </location>
</feature>
<feature type="region of interest" description="Disordered" evidence="2">
    <location>
        <begin position="386"/>
        <end position="409"/>
    </location>
</feature>
<feature type="region of interest" description="Disordered" evidence="2">
    <location>
        <begin position="645"/>
        <end position="671"/>
    </location>
</feature>
<feature type="short sequence motif" description="Nuclear localization signal" evidence="1 6">
    <location>
        <begin position="380"/>
        <end position="389"/>
    </location>
</feature>
<feature type="compositionally biased region" description="Acidic residues" evidence="2">
    <location>
        <begin position="397"/>
        <end position="409"/>
    </location>
</feature>
<feature type="compositionally biased region" description="Pro residues" evidence="2">
    <location>
        <begin position="649"/>
        <end position="665"/>
    </location>
</feature>
<feature type="site" description="Cleavage; by adenovirus protease" evidence="1">
    <location>
        <begin position="175"/>
        <end position="176"/>
    </location>
</feature>
<feature type="site" description="Cleavage; by adenovirus protease" evidence="1">
    <location>
        <begin position="349"/>
        <end position="350"/>
    </location>
</feature>
<feature type="site" description="Priming of strand displacement replication by covalently linking the first nucleotide of the new DNA chain" evidence="1">
    <location>
        <position position="580"/>
    </location>
</feature>
<feature type="modified residue" description="O-(5'-phospho-DNA)-serine" evidence="1 7">
    <location>
        <position position="580"/>
    </location>
</feature>
<feature type="mutagenesis site" description="Almost no effect on pTP activity." evidence="5">
    <original>C</original>
    <variation>S</variation>
    <location>
        <position position="8"/>
    </location>
</feature>
<feature type="mutagenesis site" description="Complete loss of DNA replication initiation and DNA binding." evidence="3">
    <original>RR</original>
    <variation>AA</variation>
    <location>
        <begin position="384"/>
        <end position="385"/>
    </location>
</feature>
<feature type="mutagenesis site" description="Complete loss of DNA binding." evidence="3">
    <original>RR</original>
    <variation>AA</variation>
    <location>
        <begin position="386"/>
        <end position="387"/>
    </location>
</feature>
<feature type="mutagenesis site" description="Complete loss of DNA replication initiation." evidence="3">
    <original>EE</original>
    <variation>AA</variation>
    <location>
        <begin position="437"/>
        <end position="438"/>
    </location>
</feature>
<feature type="mutagenesis site" description="Complete loss of DNA replication initiation." evidence="3">
    <original>Y</original>
    <variation>A</variation>
    <location>
        <position position="492"/>
    </location>
</feature>
<feature type="mutagenesis site" description="Complete loss of initiation and elongation." evidence="5">
    <original>S</original>
    <variation>T</variation>
    <location>
        <position position="580"/>
    </location>
</feature>
<evidence type="ECO:0000255" key="1">
    <source>
        <dbReference type="HAMAP-Rule" id="MF_04061"/>
    </source>
</evidence>
<evidence type="ECO:0000256" key="2">
    <source>
        <dbReference type="SAM" id="MobiDB-lite"/>
    </source>
</evidence>
<evidence type="ECO:0000269" key="3">
    <source>
    </source>
</evidence>
<evidence type="ECO:0000269" key="4">
    <source>
    </source>
</evidence>
<evidence type="ECO:0000269" key="5">
    <source>
    </source>
</evidence>
<evidence type="ECO:0000269" key="6">
    <source>
    </source>
</evidence>
<evidence type="ECO:0000269" key="7">
    <source>
    </source>
</evidence>
<evidence type="ECO:0000269" key="8">
    <source>
    </source>
</evidence>
<evidence type="ECO:0000269" key="9">
    <source>
    </source>
</evidence>
<evidence type="ECO:0000305" key="10"/>